<keyword id="KW-0002">3D-structure</keyword>
<keyword id="KW-0143">Chaperone</keyword>
<keyword id="KW-0963">Cytoplasm</keyword>
<keyword id="KW-0903">Direct protein sequencing</keyword>
<keyword id="KW-0342">GTP-binding</keyword>
<keyword id="KW-0378">Hydrolase</keyword>
<keyword id="KW-0547">Nucleotide-binding</keyword>
<keyword id="KW-1185">Reference proteome</keyword>
<keyword id="KW-0690">Ribosome biogenesis</keyword>
<keyword id="KW-0694">RNA-binding</keyword>
<keyword id="KW-0699">rRNA-binding</keyword>
<keyword id="KW-0820">tRNA-binding</keyword>
<organism>
    <name type="scientific">Escherichia coli (strain K12)</name>
    <dbReference type="NCBI Taxonomy" id="83333"/>
    <lineage>
        <taxon>Bacteria</taxon>
        <taxon>Pseudomonadati</taxon>
        <taxon>Pseudomonadota</taxon>
        <taxon>Gammaproteobacteria</taxon>
        <taxon>Enterobacterales</taxon>
        <taxon>Enterobacteriaceae</taxon>
        <taxon>Escherichia</taxon>
    </lineage>
</organism>
<dbReference type="EC" id="3.6.5.-" evidence="1 8"/>
<dbReference type="EMBL" id="L19201">
    <property type="protein sequence ID" value="AAB03005.1"/>
    <property type="molecule type" value="Genomic_DNA"/>
</dbReference>
<dbReference type="EMBL" id="U00096">
    <property type="protein sequence ID" value="AAT48232.1"/>
    <property type="molecule type" value="Genomic_DNA"/>
</dbReference>
<dbReference type="EMBL" id="AP009048">
    <property type="protein sequence ID" value="BAE77438.1"/>
    <property type="molecule type" value="Genomic_DNA"/>
</dbReference>
<dbReference type="PIR" id="S40816">
    <property type="entry name" value="S40816"/>
</dbReference>
<dbReference type="RefSeq" id="WP_000570668.1">
    <property type="nucleotide sequence ID" value="NZ_STEB01000017.1"/>
</dbReference>
<dbReference type="RefSeq" id="YP_026274.1">
    <property type="nucleotide sequence ID" value="NC_000913.3"/>
</dbReference>
<dbReference type="PDB" id="4ZCI">
    <property type="method" value="X-ray"/>
    <property type="resolution" value="2.63 A"/>
    <property type="chains" value="A/B=1-601"/>
</dbReference>
<dbReference type="PDB" id="4ZCK">
    <property type="method" value="X-ray"/>
    <property type="resolution" value="2.48 A"/>
    <property type="chains" value="A=306-603"/>
</dbReference>
<dbReference type="PDB" id="4ZCL">
    <property type="method" value="X-ray"/>
    <property type="resolution" value="3.06 A"/>
    <property type="chains" value="A/B=1-601"/>
</dbReference>
<dbReference type="PDB" id="4ZCM">
    <property type="method" value="X-ray"/>
    <property type="resolution" value="3.31 A"/>
    <property type="chains" value="A/B=1-607"/>
</dbReference>
<dbReference type="PDB" id="5A9V">
    <property type="method" value="X-ray"/>
    <property type="resolution" value="3.31 A"/>
    <property type="chains" value="A/B/C/D/E/F=1-607"/>
</dbReference>
<dbReference type="PDB" id="5A9W">
    <property type="method" value="X-ray"/>
    <property type="resolution" value="3.70 A"/>
    <property type="chains" value="A=1-607"/>
</dbReference>
<dbReference type="PDB" id="5A9X">
    <property type="method" value="X-ray"/>
    <property type="resolution" value="3.80 A"/>
    <property type="chains" value="A=1-607"/>
</dbReference>
<dbReference type="PDB" id="5A9Y">
    <property type="method" value="X-ray"/>
    <property type="resolution" value="4.00 A"/>
    <property type="chains" value="A=1-607"/>
</dbReference>
<dbReference type="PDB" id="5A9Z">
    <property type="method" value="EM"/>
    <property type="resolution" value="4.70 A"/>
    <property type="chains" value="CA=1-605"/>
</dbReference>
<dbReference type="PDB" id="5AA0">
    <property type="method" value="EM"/>
    <property type="resolution" value="5.00 A"/>
    <property type="chains" value="BZ=1-605"/>
</dbReference>
<dbReference type="PDBsum" id="4ZCI"/>
<dbReference type="PDBsum" id="4ZCK"/>
<dbReference type="PDBsum" id="4ZCL"/>
<dbReference type="PDBsum" id="4ZCM"/>
<dbReference type="PDBsum" id="5A9V"/>
<dbReference type="PDBsum" id="5A9W"/>
<dbReference type="PDBsum" id="5A9X"/>
<dbReference type="PDBsum" id="5A9Y"/>
<dbReference type="PDBsum" id="5A9Z"/>
<dbReference type="PDBsum" id="5AA0"/>
<dbReference type="EMDB" id="EMD-6396"/>
<dbReference type="EMDB" id="EMD-6397"/>
<dbReference type="SMR" id="P0DTT0"/>
<dbReference type="DIP" id="DIP-11058N"/>
<dbReference type="FunCoup" id="P0DTT0">
    <property type="interactions" value="611"/>
</dbReference>
<dbReference type="IntAct" id="P0DTT0">
    <property type="interactions" value="5"/>
</dbReference>
<dbReference type="STRING" id="511145.b3871"/>
<dbReference type="jPOST" id="P0DTT0"/>
<dbReference type="PaxDb" id="511145-b3871"/>
<dbReference type="GeneID" id="93778065"/>
<dbReference type="GeneID" id="948369"/>
<dbReference type="KEGG" id="ecj:JW5571"/>
<dbReference type="KEGG" id="eco:b3871"/>
<dbReference type="KEGG" id="ecoc:C3026_20930"/>
<dbReference type="EchoBASE" id="EB1783"/>
<dbReference type="InParanoid" id="P0DTT0"/>
<dbReference type="OMA" id="MSMLFTI"/>
<dbReference type="OrthoDB" id="9801472at2"/>
<dbReference type="BioCyc" id="EcoCyc:EG11837-MONOMER"/>
<dbReference type="BRENDA" id="3.6.5.3">
    <property type="organism ID" value="2026"/>
</dbReference>
<dbReference type="EvolutionaryTrace" id="P0DTT0"/>
<dbReference type="PRO" id="PR:P0DTT0"/>
<dbReference type="Proteomes" id="UP000000625">
    <property type="component" value="Chromosome"/>
</dbReference>
<dbReference type="GO" id="GO:0005829">
    <property type="term" value="C:cytosol"/>
    <property type="evidence" value="ECO:0000314"/>
    <property type="project" value="EcoCyc"/>
</dbReference>
<dbReference type="GO" id="GO:1990904">
    <property type="term" value="C:ribonucleoprotein complex"/>
    <property type="evidence" value="ECO:0000318"/>
    <property type="project" value="GO_Central"/>
</dbReference>
<dbReference type="GO" id="GO:0005525">
    <property type="term" value="F:GTP binding"/>
    <property type="evidence" value="ECO:0007669"/>
    <property type="project" value="UniProtKB-UniRule"/>
</dbReference>
<dbReference type="GO" id="GO:0003924">
    <property type="term" value="F:GTPase activity"/>
    <property type="evidence" value="ECO:0000314"/>
    <property type="project" value="EcoCyc"/>
</dbReference>
<dbReference type="GO" id="GO:0097216">
    <property type="term" value="F:guanosine tetraphosphate binding"/>
    <property type="evidence" value="ECO:0000314"/>
    <property type="project" value="EcoCyc"/>
</dbReference>
<dbReference type="GO" id="GO:0044183">
    <property type="term" value="F:protein folding chaperone"/>
    <property type="evidence" value="ECO:0000314"/>
    <property type="project" value="EcoCyc"/>
</dbReference>
<dbReference type="GO" id="GO:0043022">
    <property type="term" value="F:ribosome binding"/>
    <property type="evidence" value="ECO:0007669"/>
    <property type="project" value="UniProtKB-UniRule"/>
</dbReference>
<dbReference type="GO" id="GO:0019843">
    <property type="term" value="F:rRNA binding"/>
    <property type="evidence" value="ECO:0007669"/>
    <property type="project" value="UniProtKB-KW"/>
</dbReference>
<dbReference type="GO" id="GO:0000049">
    <property type="term" value="F:tRNA binding"/>
    <property type="evidence" value="ECO:0007669"/>
    <property type="project" value="UniProtKB-KW"/>
</dbReference>
<dbReference type="GO" id="GO:0009409">
    <property type="term" value="P:response to cold"/>
    <property type="evidence" value="ECO:0000315"/>
    <property type="project" value="EcoCyc"/>
</dbReference>
<dbReference type="GO" id="GO:0009408">
    <property type="term" value="P:response to heat"/>
    <property type="evidence" value="ECO:0000315"/>
    <property type="project" value="EcoCyc"/>
</dbReference>
<dbReference type="GO" id="GO:0000027">
    <property type="term" value="P:ribosomal large subunit assembly"/>
    <property type="evidence" value="ECO:0000315"/>
    <property type="project" value="EcoCyc"/>
</dbReference>
<dbReference type="GO" id="GO:0006412">
    <property type="term" value="P:translation"/>
    <property type="evidence" value="ECO:0000316"/>
    <property type="project" value="EcoCyc"/>
</dbReference>
<dbReference type="CDD" id="cd16263">
    <property type="entry name" value="BipA_III"/>
    <property type="match status" value="1"/>
</dbReference>
<dbReference type="CDD" id="cd03710">
    <property type="entry name" value="BipA_TypA_C"/>
    <property type="match status" value="1"/>
</dbReference>
<dbReference type="CDD" id="cd03691">
    <property type="entry name" value="BipA_TypA_II"/>
    <property type="match status" value="1"/>
</dbReference>
<dbReference type="CDD" id="cd01891">
    <property type="entry name" value="TypA_BipA"/>
    <property type="match status" value="1"/>
</dbReference>
<dbReference type="FunFam" id="2.40.30.10:FF:000016">
    <property type="entry name" value="GTP-binding protein TypA"/>
    <property type="match status" value="1"/>
</dbReference>
<dbReference type="FunFam" id="2.40.50.250:FF:000001">
    <property type="entry name" value="GTP-binding protein TypA"/>
    <property type="match status" value="1"/>
</dbReference>
<dbReference type="FunFam" id="3.30.70.240:FF:000002">
    <property type="entry name" value="GTP-binding protein TypA"/>
    <property type="match status" value="1"/>
</dbReference>
<dbReference type="FunFam" id="3.30.70.870:FF:000003">
    <property type="entry name" value="GTP-binding protein TypA"/>
    <property type="match status" value="1"/>
</dbReference>
<dbReference type="FunFam" id="3.40.50.300:FF:000055">
    <property type="entry name" value="GTP-binding protein TypA"/>
    <property type="match status" value="1"/>
</dbReference>
<dbReference type="Gene3D" id="3.30.70.240">
    <property type="match status" value="1"/>
</dbReference>
<dbReference type="Gene3D" id="2.40.50.250">
    <property type="entry name" value="bipa protein"/>
    <property type="match status" value="1"/>
</dbReference>
<dbReference type="Gene3D" id="3.30.70.870">
    <property type="entry name" value="Elongation Factor G (Translational Gtpase), domain 3"/>
    <property type="match status" value="1"/>
</dbReference>
<dbReference type="Gene3D" id="3.40.50.300">
    <property type="entry name" value="P-loop containing nucleotide triphosphate hydrolases"/>
    <property type="match status" value="1"/>
</dbReference>
<dbReference type="Gene3D" id="2.40.30.10">
    <property type="entry name" value="Translation factors"/>
    <property type="match status" value="1"/>
</dbReference>
<dbReference type="HAMAP" id="MF_00849">
    <property type="entry name" value="BipA"/>
    <property type="match status" value="1"/>
</dbReference>
<dbReference type="InterPro" id="IPR006298">
    <property type="entry name" value="BipA"/>
</dbReference>
<dbReference type="InterPro" id="IPR048876">
    <property type="entry name" value="BipA_C"/>
</dbReference>
<dbReference type="InterPro" id="IPR047041">
    <property type="entry name" value="BipA_GTP-bd_dom"/>
</dbReference>
<dbReference type="InterPro" id="IPR047042">
    <property type="entry name" value="BipA_II"/>
</dbReference>
<dbReference type="InterPro" id="IPR047043">
    <property type="entry name" value="BipA_III"/>
</dbReference>
<dbReference type="InterPro" id="IPR035651">
    <property type="entry name" value="BipA_V"/>
</dbReference>
<dbReference type="InterPro" id="IPR035647">
    <property type="entry name" value="EFG_III/V"/>
</dbReference>
<dbReference type="InterPro" id="IPR000640">
    <property type="entry name" value="EFG_V-like"/>
</dbReference>
<dbReference type="InterPro" id="IPR004161">
    <property type="entry name" value="EFTu-like_2"/>
</dbReference>
<dbReference type="InterPro" id="IPR031157">
    <property type="entry name" value="G_TR_CS"/>
</dbReference>
<dbReference type="InterPro" id="IPR027417">
    <property type="entry name" value="P-loop_NTPase"/>
</dbReference>
<dbReference type="InterPro" id="IPR005225">
    <property type="entry name" value="Small_GTP-bd"/>
</dbReference>
<dbReference type="InterPro" id="IPR000795">
    <property type="entry name" value="T_Tr_GTP-bd_dom"/>
</dbReference>
<dbReference type="InterPro" id="IPR009000">
    <property type="entry name" value="Transl_B-barrel_sf"/>
</dbReference>
<dbReference type="InterPro" id="IPR042116">
    <property type="entry name" value="TypA/BipA_C"/>
</dbReference>
<dbReference type="NCBIfam" id="NF007583">
    <property type="entry name" value="PRK10218.1"/>
    <property type="match status" value="1"/>
</dbReference>
<dbReference type="NCBIfam" id="TIGR00231">
    <property type="entry name" value="small_GTP"/>
    <property type="match status" value="1"/>
</dbReference>
<dbReference type="NCBIfam" id="TIGR01394">
    <property type="entry name" value="TypA_BipA"/>
    <property type="match status" value="1"/>
</dbReference>
<dbReference type="PANTHER" id="PTHR42908:SF8">
    <property type="entry name" value="TR-TYPE G DOMAIN-CONTAINING PROTEIN"/>
    <property type="match status" value="1"/>
</dbReference>
<dbReference type="PANTHER" id="PTHR42908">
    <property type="entry name" value="TRANSLATION ELONGATION FACTOR-RELATED"/>
    <property type="match status" value="1"/>
</dbReference>
<dbReference type="Pfam" id="PF21018">
    <property type="entry name" value="BipA_C"/>
    <property type="match status" value="1"/>
</dbReference>
<dbReference type="Pfam" id="PF00679">
    <property type="entry name" value="EFG_C"/>
    <property type="match status" value="1"/>
</dbReference>
<dbReference type="Pfam" id="PF00009">
    <property type="entry name" value="GTP_EFTU"/>
    <property type="match status" value="1"/>
</dbReference>
<dbReference type="Pfam" id="PF03144">
    <property type="entry name" value="GTP_EFTU_D2"/>
    <property type="match status" value="1"/>
</dbReference>
<dbReference type="PRINTS" id="PR00315">
    <property type="entry name" value="ELONGATNFCT"/>
</dbReference>
<dbReference type="SUPFAM" id="SSF54980">
    <property type="entry name" value="EF-G C-terminal domain-like"/>
    <property type="match status" value="2"/>
</dbReference>
<dbReference type="SUPFAM" id="SSF52540">
    <property type="entry name" value="P-loop containing nucleoside triphosphate hydrolases"/>
    <property type="match status" value="1"/>
</dbReference>
<dbReference type="SUPFAM" id="SSF50447">
    <property type="entry name" value="Translation proteins"/>
    <property type="match status" value="1"/>
</dbReference>
<dbReference type="PROSITE" id="PS00301">
    <property type="entry name" value="G_TR_1"/>
    <property type="match status" value="1"/>
</dbReference>
<dbReference type="PROSITE" id="PS51722">
    <property type="entry name" value="G_TR_2"/>
    <property type="match status" value="1"/>
</dbReference>
<feature type="chain" id="PRO_0000091550" description="Large ribosomal subunit assembly factor BipA">
    <location>
        <begin position="1"/>
        <end position="607"/>
    </location>
</feature>
<feature type="domain" description="tr-type G" evidence="1">
    <location>
        <begin position="3"/>
        <end position="198"/>
    </location>
</feature>
<feature type="region of interest" description="Domain I (or G domain), required for chaperone activity" evidence="8 18 19">
    <location>
        <begin position="1"/>
        <end position="202"/>
    </location>
</feature>
<feature type="region of interest" description="Domain II (or beta barrel domain)" evidence="18 19">
    <location>
        <begin position="203"/>
        <end position="320"/>
    </location>
</feature>
<feature type="region of interest" description="Domain III" evidence="18 19">
    <location>
        <begin position="303"/>
        <end position="385"/>
    </location>
</feature>
<feature type="region of interest" description="Domain V" evidence="18 19">
    <location>
        <begin position="386"/>
        <end position="482"/>
    </location>
</feature>
<feature type="region of interest" description="C-terminal domain (CTD), binds A-site tRNA" evidence="18 19">
    <location>
        <begin position="483"/>
        <end position="607"/>
    </location>
</feature>
<feature type="binding site" evidence="1 6 7 22 23 25 27">
    <location>
        <begin position="15"/>
        <end position="20"/>
    </location>
    <ligand>
        <name>GTP</name>
        <dbReference type="ChEBI" id="CHEBI:37565"/>
    </ligand>
</feature>
<feature type="binding site" evidence="1 6 22 23 27">
    <location>
        <begin position="128"/>
        <end position="131"/>
    </location>
    <ligand>
        <name>GTP</name>
        <dbReference type="ChEBI" id="CHEBI:37565"/>
    </ligand>
</feature>
<feature type="binding site" evidence="6 22 23 25">
    <location>
        <begin position="166"/>
        <end position="168"/>
    </location>
    <ligand>
        <name>GTP</name>
        <dbReference type="ChEBI" id="CHEBI:37565"/>
    </ligand>
</feature>
<feature type="mutagenesis site" description="No GTPase activity, does not restore normal ribosomes to a bipA deletion, does not associate with ribosomes, retains its ability to help proteins refold." evidence="8">
    <original>N</original>
    <variation>D</variation>
    <location>
        <position position="128"/>
    </location>
</feature>
<feature type="mutagenesis site" description="No change in growth at 20 degrees Celsius." evidence="8">
    <original>Y</original>
    <variation>P</variation>
    <location>
        <position position="164"/>
    </location>
</feature>
<feature type="mutagenesis site" description="No change in growth at 20 degrees Celsius." evidence="8">
    <original>Y</original>
    <variation>P</variation>
    <location>
        <position position="472"/>
    </location>
</feature>
<feature type="mutagenesis site" description="No change in growth at 20 degrees Celsius." evidence="8">
    <original>Y</original>
    <variation>P</variation>
    <location>
        <position position="519"/>
    </location>
</feature>
<feature type="sequence conflict" description="In Ref. 1; AAB03005." evidence="15" ref="1">
    <location>
        <begin position="592"/>
        <end position="607"/>
    </location>
</feature>
<feature type="helix" evidence="30">
    <location>
        <begin position="2"/>
        <end position="4"/>
    </location>
</feature>
<feature type="strand" evidence="30">
    <location>
        <begin position="5"/>
        <end position="11"/>
    </location>
</feature>
<feature type="turn" evidence="30">
    <location>
        <begin position="19"/>
        <end position="22"/>
    </location>
</feature>
<feature type="helix" evidence="30">
    <location>
        <begin position="23"/>
        <end position="25"/>
    </location>
</feature>
<feature type="strand" evidence="30">
    <location>
        <begin position="57"/>
        <end position="60"/>
    </location>
</feature>
<feature type="strand" evidence="30">
    <location>
        <begin position="68"/>
        <end position="74"/>
    </location>
</feature>
<feature type="helix" evidence="30">
    <location>
        <begin position="84"/>
        <end position="91"/>
    </location>
</feature>
<feature type="strand" evidence="30">
    <location>
        <begin position="93"/>
        <end position="103"/>
    </location>
</feature>
<feature type="helix" evidence="30">
    <location>
        <begin position="108"/>
        <end position="118"/>
    </location>
</feature>
<feature type="strand" evidence="30">
    <location>
        <begin position="122"/>
        <end position="128"/>
    </location>
</feature>
<feature type="strand" evidence="30">
    <location>
        <begin position="130"/>
        <end position="134"/>
    </location>
</feature>
<feature type="helix" evidence="30">
    <location>
        <begin position="137"/>
        <end position="149"/>
    </location>
</feature>
<feature type="strand" evidence="30">
    <location>
        <begin position="175"/>
        <end position="177"/>
    </location>
</feature>
<feature type="helix" evidence="30">
    <location>
        <begin position="184"/>
        <end position="193"/>
    </location>
</feature>
<feature type="strand" evidence="30">
    <location>
        <begin position="200"/>
        <end position="204"/>
    </location>
</feature>
<feature type="strand" evidence="30">
    <location>
        <begin position="206"/>
        <end position="209"/>
    </location>
</feature>
<feature type="strand" evidence="30">
    <location>
        <begin position="213"/>
        <end position="215"/>
    </location>
</feature>
<feature type="turn" evidence="30">
    <location>
        <begin position="216"/>
        <end position="218"/>
    </location>
</feature>
<feature type="strand" evidence="30">
    <location>
        <begin position="219"/>
        <end position="221"/>
    </location>
</feature>
<feature type="strand" evidence="30">
    <location>
        <begin position="224"/>
        <end position="231"/>
    </location>
</feature>
<feature type="strand" evidence="30">
    <location>
        <begin position="237"/>
        <end position="239"/>
    </location>
</feature>
<feature type="turn" evidence="30">
    <location>
        <begin position="240"/>
        <end position="243"/>
    </location>
</feature>
<feature type="strand" evidence="30">
    <location>
        <begin position="244"/>
        <end position="246"/>
    </location>
</feature>
<feature type="strand" evidence="30">
    <location>
        <begin position="287"/>
        <end position="293"/>
    </location>
</feature>
<feature type="strand" evidence="30">
    <location>
        <begin position="306"/>
        <end position="313"/>
    </location>
</feature>
<feature type="turn" evidence="30">
    <location>
        <begin position="317"/>
        <end position="320"/>
    </location>
</feature>
<feature type="strand" evidence="30">
    <location>
        <begin position="321"/>
        <end position="325"/>
    </location>
</feature>
<feature type="helix" evidence="30">
    <location>
        <begin position="328"/>
        <end position="341"/>
    </location>
</feature>
<feature type="strand" evidence="30">
    <location>
        <begin position="346"/>
        <end position="349"/>
    </location>
</feature>
<feature type="strand" evidence="30">
    <location>
        <begin position="355"/>
        <end position="363"/>
    </location>
</feature>
<feature type="helix" evidence="30">
    <location>
        <begin position="364"/>
        <end position="375"/>
    </location>
</feature>
<feature type="strand" evidence="30">
    <location>
        <begin position="380"/>
        <end position="382"/>
    </location>
</feature>
<feature type="strand" evidence="30">
    <location>
        <begin position="392"/>
        <end position="395"/>
    </location>
</feature>
<feature type="strand" evidence="30">
    <location>
        <begin position="397"/>
        <end position="408"/>
    </location>
</feature>
<feature type="turn" evidence="30">
    <location>
        <begin position="409"/>
        <end position="411"/>
    </location>
</feature>
<feature type="helix" evidence="30">
    <location>
        <begin position="412"/>
        <end position="420"/>
    </location>
</feature>
<feature type="turn" evidence="30">
    <location>
        <begin position="421"/>
        <end position="423"/>
    </location>
</feature>
<feature type="strand" evidence="30">
    <location>
        <begin position="426"/>
        <end position="429"/>
    </location>
</feature>
<feature type="strand" evidence="30">
    <location>
        <begin position="433"/>
        <end position="444"/>
    </location>
</feature>
<feature type="helix" evidence="30">
    <location>
        <begin position="445"/>
        <end position="448"/>
    </location>
</feature>
<feature type="helix" evidence="30">
    <location>
        <begin position="451"/>
        <end position="459"/>
    </location>
</feature>
<feature type="strand" evidence="30">
    <location>
        <begin position="463"/>
        <end position="474"/>
    </location>
</feature>
<feature type="strand" evidence="30">
    <location>
        <begin position="487"/>
        <end position="489"/>
    </location>
</feature>
<feature type="strand" evidence="30">
    <location>
        <begin position="492"/>
        <end position="495"/>
    </location>
</feature>
<feature type="helix" evidence="30">
    <location>
        <begin position="498"/>
        <end position="504"/>
    </location>
</feature>
<feature type="turn" evidence="30">
    <location>
        <begin position="505"/>
        <end position="507"/>
    </location>
</feature>
<feature type="strand" evidence="30">
    <location>
        <begin position="523"/>
        <end position="526"/>
    </location>
</feature>
<feature type="strand" evidence="30">
    <location>
        <begin position="528"/>
        <end position="531"/>
    </location>
</feature>
<feature type="helix" evidence="30">
    <location>
        <begin position="565"/>
        <end position="569"/>
    </location>
</feature>
<feature type="strand" evidence="30">
    <location>
        <begin position="576"/>
        <end position="580"/>
    </location>
</feature>
<feature type="strand" evidence="30">
    <location>
        <begin position="585"/>
        <end position="591"/>
    </location>
</feature>
<feature type="helix" evidence="30">
    <location>
        <begin position="594"/>
        <end position="598"/>
    </location>
</feature>
<gene>
    <name evidence="1 14" type="primary">bipA</name>
    <name evidence="13" type="synonym">o591</name>
    <name type="synonym">typA</name>
    <name type="synonym">yihK</name>
    <name type="ordered locus">b3871</name>
    <name type="ordered locus">JW5571</name>
</gene>
<evidence type="ECO:0000255" key="1">
    <source>
        <dbReference type="HAMAP-Rule" id="MF_00849"/>
    </source>
</evidence>
<evidence type="ECO:0000269" key="2">
    <source>
    </source>
</evidence>
<evidence type="ECO:0000269" key="3">
    <source>
    </source>
</evidence>
<evidence type="ECO:0000269" key="4">
    <source>
    </source>
</evidence>
<evidence type="ECO:0000269" key="5">
    <source>
    </source>
</evidence>
<evidence type="ECO:0000269" key="6">
    <source>
    </source>
</evidence>
<evidence type="ECO:0000269" key="7">
    <source>
    </source>
</evidence>
<evidence type="ECO:0000269" key="8">
    <source>
    </source>
</evidence>
<evidence type="ECO:0000269" key="9">
    <source>
    </source>
</evidence>
<evidence type="ECO:0000269" key="10">
    <source>
    </source>
</evidence>
<evidence type="ECO:0000269" key="11">
    <source ref="12"/>
</evidence>
<evidence type="ECO:0000303" key="12">
    <source>
    </source>
</evidence>
<evidence type="ECO:0000303" key="13">
    <source>
    </source>
</evidence>
<evidence type="ECO:0000303" key="14">
    <source>
    </source>
</evidence>
<evidence type="ECO:0000305" key="15"/>
<evidence type="ECO:0000305" key="16">
    <source>
    </source>
</evidence>
<evidence type="ECO:0000305" key="17">
    <source>
    </source>
</evidence>
<evidence type="ECO:0000305" key="18">
    <source>
    </source>
</evidence>
<evidence type="ECO:0000305" key="19">
    <source>
    </source>
</evidence>
<evidence type="ECO:0007744" key="20">
    <source>
        <dbReference type="PDB" id="4ZCI"/>
    </source>
</evidence>
<evidence type="ECO:0007744" key="21">
    <source>
        <dbReference type="PDB" id="4ZCK"/>
    </source>
</evidence>
<evidence type="ECO:0007744" key="22">
    <source>
        <dbReference type="PDB" id="4ZCL"/>
    </source>
</evidence>
<evidence type="ECO:0007744" key="23">
    <source>
        <dbReference type="PDB" id="4ZCM"/>
    </source>
</evidence>
<evidence type="ECO:0007744" key="24">
    <source>
        <dbReference type="PDB" id="5A9V"/>
    </source>
</evidence>
<evidence type="ECO:0007744" key="25">
    <source>
        <dbReference type="PDB" id="5A9W"/>
    </source>
</evidence>
<evidence type="ECO:0007744" key="26">
    <source>
        <dbReference type="PDB" id="5A9X"/>
    </source>
</evidence>
<evidence type="ECO:0007744" key="27">
    <source>
        <dbReference type="PDB" id="5A9Y"/>
    </source>
</evidence>
<evidence type="ECO:0007744" key="28">
    <source>
        <dbReference type="PDB" id="5A9Z"/>
    </source>
</evidence>
<evidence type="ECO:0007744" key="29">
    <source>
        <dbReference type="PDB" id="5AA0"/>
    </source>
</evidence>
<evidence type="ECO:0007829" key="30">
    <source>
        <dbReference type="PDB" id="5A9V"/>
    </source>
</evidence>
<proteinExistence type="evidence at protein level"/>
<name>BIPA_ECOLI</name>
<accession>P0DTT0</accession>
<accession>P32132</accession>
<accession>Q2M8G8</accession>
<accession>Q6BEY2</accession>
<sequence length="607" mass="67355">MIEKLRNIAIIAHVDHGKTTLVDKLLQQSGTFDSRAETQERVMDSNDLEKERGITILAKNTAIKWNDYRINIVDTPGHADFGGEVERVMSMVDSVLLVVDAFDGPMPQTRFVTKKAFAYGLKPIVVINKVDRPGARPDWVVDQVFDLFVNLDATDEQLDFPIVYASALNGIAGLDHEDMAEDMTPLYQAIVDHVPAPDVDLDGPFQMQISQLDYNSYVGVIGIGRIKRGKVKPNQQVTIIDSEGKTRNAKVGKVLGHLGLERIETDLAEAGDIVAITGLGELNISDTVCDTQNVEALPALSVDEPTVSMFFCVNTSPFCGKEGKFVTSRQILDRLNKELVHNVALRVEETEDADAFRVSGRGELHLSVLIENMRREGFELAVSRPKVIFREIDGRKQEPYENVTLDVEEQHQGSVMQALGERKGDLKNMNPDGKGRVRLDYVIPSRGLIGFRSEFMTMTSGTGLLYSTFSHYDDVRPGEVGQRQNGVLISNGQGKAVAFALFGLQDRGKLFLGHGAEVYEGQIIGIHSRSNDLTVNCLTGKKLTNMRASGTDEAVVLVPPIRMTLEQALEFIDDDELVEVTPTSIRIRKRHLTENDRRRANRAPKDD</sequence>
<comment type="function">
    <text evidence="4 5 6 7 8 9 11 16 17">A 50S ribosomal subunit assembly protein with GTPase and nucleotide-independent chaperone activity, required for 50S subunit assembly at low temperatures, may also play a role in translation (PubMed:30305394). Genetic and deletion evidence suggests this is involved in ribosome assembly at low temperatures; it may also affect translation (Probable) (PubMed:25777676, PubMed:30305394). Involved in incorporation of ribosomal protein uL6 into precursor 44S ribosomal particles at low temperatures. Also has chaperone activity which does not require nucleotides (PubMed:30305394). Binds GDP, ppGpp and GDPCP (a nonhydrolyzable GTP analog) with similar affinity; the conformation of the protein does not significantly change upon nucleotide binding (PubMed:26163516, PubMed:26283392). Interacts with ribosomes (PubMed:26283392, Ref.12). Binds the 70S ribosome between the 30S and 50S subunits, in a similar position as ribosome-bound EF-G; it contacts a number of ribosomal proteins, both rRNAs and the A-site tRNA. Ribosome binding alters its conformation (PubMed:26283392). Genetically its function does not overlap LepA, and it acts in a different pathway during ribosome assembly than does RNA helicase DeaD (PubMed:25777676). GTPase that affects interactions between enteropathogenic E.coli (EPEC) and epithelial cells (PubMed:9622352). Probably regulates expression of proteins required for (at least) K5 polysaccharide production (Probable) (PubMed:10781541). Deletion mutants of bipA are suppressed by an rluC deletion, which no longer modifies uracils 955, 2504 and 2580 to pseudouridine in 23S rRNA; there are 5 other pseudouridine synthases in E.coli, only rluC suppresses this phenotype. Mutating 23S rRNA so the 3 uracils are other nucleotides also suppresses the bipA deletion; pseudouridine-2504 is required for ribosome assembly and translational accuracy (PubMed:18820021, PubMed:25777676).</text>
</comment>
<comment type="catalytic activity">
    <reaction evidence="1 8">
        <text>GTP + H2O = GDP + phosphate + H(+)</text>
        <dbReference type="Rhea" id="RHEA:19669"/>
        <dbReference type="ChEBI" id="CHEBI:15377"/>
        <dbReference type="ChEBI" id="CHEBI:15378"/>
        <dbReference type="ChEBI" id="CHEBI:37565"/>
        <dbReference type="ChEBI" id="CHEBI:43474"/>
        <dbReference type="ChEBI" id="CHEBI:58189"/>
    </reaction>
</comment>
<comment type="subunit">
    <text evidence="6 7">Monomer (PubMed:26163516, PubMed:26283392). Binds between the 30S and 50S ribosomal subunits, in a similar position as ribosome-bound EF-G; it contacts proteins bL12 (L7/12), uL11, uS2, 16S and 23S rRNA and the A-site tRNA. Binding to the ribosome alters its conformation (PubMed:26283392).</text>
</comment>
<comment type="interaction">
    <interactant intactId="EBI-562154">
        <id>P0DTT0</id>
    </interactant>
    <interactant intactId="EBI-547718">
        <id>P75864</id>
        <label>rlmL</label>
    </interactant>
    <organismsDiffer>false</organismsDiffer>
    <experiments>3</experiments>
</comment>
<comment type="interaction">
    <interactant intactId="EBI-562154">
        <id>P0DTT0</id>
    </interactant>
    <interactant intactId="EBI-560240">
        <id>P0A898</id>
        <label>ybeY</label>
    </interactant>
    <organismsDiffer>false</organismsDiffer>
    <experiments>2</experiments>
</comment>
<comment type="interaction">
    <interactant intactId="EBI-562154">
        <id>P0DTT0</id>
    </interactant>
    <interactant intactId="EBI-561235">
        <id>P27862</id>
        <label>yigZ</label>
    </interactant>
    <organismsDiffer>false</organismsDiffer>
    <experiments>2</experiments>
</comment>
<comment type="subcellular location">
    <subcellularLocation>
        <location evidence="1 8 11">Cytoplasm</location>
    </subcellularLocation>
    <text evidence="8">Associates with 70S ribosomes and 30S and 50S subunits in the presence of GMPPNP (a nonhydrolyzable GTP analog) at both 20 and 37 degrees Celsius; no change in ribosome association is seen in the presence of ppGpp or when the stringent response is triggered.</text>
</comment>
<comment type="induction">
    <text evidence="8 11">Induced about 2-fold at 18 degrees Celsius (at protein level) (Ref.12). Basally expressed at 37 degrees Celsius, 3.5-fold induced after shift to 20 degrees Celsius, maximal expression is seen at 2 hours (at protein level). No increase in expression when cells are grown at 43 degrees Celsius or when engineered to produce increased levels of the stress second messenger ppGpp. Expression at low temperatures is activated by CRP (PubMed:30305394).</text>
</comment>
<comment type="domain">
    <text evidence="6 7 8">Crystallizes with 2 superdomains; the first comprises domains I (residues 1-202, also called the G domain) and II (203-302, also called the beta barrel domain), while the second is composed of domains III (303-385), V (386-482) and a BipA-specific C-terminal domain (CTD, 483-607). Domains I-V are homologous to domains in EF-G and LepA; although the domains are similar, their relative arrangement is different (PubMed:26163516, PubMed:26283392). The structure of isolated superdomain 2 is more compact in the presence of Mg(2+) than in the intact protein (PubMed:26163516). Upon ribosome binding the second superdomain shifts and the CTD assumes a more compact conformation. The CTD binds to the A-site tRNA (PubMed:26283392). Chaperone activity resides in domain I; truncated proteins of 49-607 and 149-607 have no chaperone activity (PubMed:30305394).</text>
</comment>
<comment type="PTM">
    <text evidence="8 9 10">Very poorly to not phosphorylated on tyrosine (PubMed:30305394, PubMed:9622352, PubMed:9642082). Phosphorylation in vitro is strongly activated by proteins present in pathogenic strain E2348/69 / EPEC / MAR001 but not non-pathogenic strain K12 / DH5 alpha. Phosphorylation in vitro increases GTPase activity (PubMed:9622352). Mutation of 3 conserved Tyr residues (Tyr-164; Ty5-47 or Tyr-591) to Phe alone or in all combinations has no effect on the ability of the protein to restore growth to a deletion mutant, suggesting Tyr-phosphorylation is not important in non-EPEC strains (PubMed:30305394).</text>
</comment>
<comment type="disruption phenotype">
    <text evidence="2 3 4 5 8 11">Decreased extracellular K5 polysaccharide production at 37 degrees Celsius, increased extracellular K5 polysaccharide production at 20 degrees Celsius (PubMed:10781541). Cold-sensitive growth (20 degrees Celsius); cells have a long lag phase and double more slowly (PubMed:11683274, PubMed:18820021). Decreased capsule synthesis. Cold sensitive growth and decreased capsule synthesis are suppressed by an rluC deletion (PubMed:18820021). Cold-sensitive growth (20 degrees Celsius); a single bipA deletion has a disturbed ribosome profile at low temperature, with more 30S than 50S subunits, accumulation of a precursor-23S rRNA and precursor 50S subunit and decreased 70S ribosomes (PubMed:25777676, PubMed:30305394). These ribosome phenotypes are suppressed in an rluC deletion. A double bipA-deaD deletion has a more severe growth and ribosome phenotype than either single deletion (PubMed:25777676). At 20 degrees Celsius the single deletion is missing ribosomal protein uL6 and has decreased amounts of bL9 and uL18 and makes less capsule. It has decreased motility at both 20 and 37 degrees Celsius (PubMed:30305394). Cold-sensitive growth (18 degrees Celsius); 2-fold more Uup is expressed at 37 degrees Celsius, 10-fold more Uup at 18 degrees Celsius. A double bipA-uup deletion does not grow at 18 degrees Celsius (Ref.12).</text>
</comment>
<comment type="similarity">
    <text evidence="1">Belongs to the TRAFAC class translation factor GTPase superfamily. Classic translation factor GTPase family. BipA subfamily.</text>
</comment>
<protein>
    <recommendedName>
        <fullName evidence="1">Large ribosomal subunit assembly factor BipA</fullName>
        <ecNumber evidence="1 8">3.6.5.-</ecNumber>
    </recommendedName>
    <alternativeName>
        <fullName evidence="12">50S ribosomal subunit assembly factor BipA</fullName>
    </alternativeName>
    <alternativeName>
        <fullName>GTP-binding protein BipA/TypA</fullName>
    </alternativeName>
    <alternativeName>
        <fullName>Ribosome assembly factor BipA</fullName>
    </alternativeName>
    <alternativeName>
        <fullName>Ribosome-dependent GTPase BipA</fullName>
    </alternativeName>
    <alternativeName>
        <fullName>Tyrosine phosphorylated protein A</fullName>
    </alternativeName>
</protein>
<reference key="1">
    <citation type="journal article" date="1993" name="Nucleic Acids Res.">
        <title>Analysis of the Escherichia coli genome. III. DNA sequence of the region from 87.2 to 89.2 minutes.</title>
        <authorList>
            <person name="Plunkett G. III"/>
            <person name="Burland V."/>
            <person name="Daniels D.L."/>
            <person name="Blattner F.R."/>
        </authorList>
    </citation>
    <scope>NUCLEOTIDE SEQUENCE [LARGE SCALE GENOMIC DNA]</scope>
    <source>
        <strain>K12 / MG1655 / ATCC 47076</strain>
    </source>
</reference>
<reference key="2">
    <citation type="journal article" date="1997" name="Science">
        <title>The complete genome sequence of Escherichia coli K-12.</title>
        <authorList>
            <person name="Blattner F.R."/>
            <person name="Plunkett G. III"/>
            <person name="Bloch C.A."/>
            <person name="Perna N.T."/>
            <person name="Burland V."/>
            <person name="Riley M."/>
            <person name="Collado-Vides J."/>
            <person name="Glasner J.D."/>
            <person name="Rode C.K."/>
            <person name="Mayhew G.F."/>
            <person name="Gregor J."/>
            <person name="Davis N.W."/>
            <person name="Kirkpatrick H.A."/>
            <person name="Goeden M.A."/>
            <person name="Rose D.J."/>
            <person name="Mau B."/>
            <person name="Shao Y."/>
        </authorList>
    </citation>
    <scope>NUCLEOTIDE SEQUENCE [LARGE SCALE GENOMIC DNA]</scope>
    <source>
        <strain>K12 / MG1655 / ATCC 47076</strain>
    </source>
</reference>
<reference key="3">
    <citation type="journal article" date="2006" name="Nucleic Acids Res.">
        <title>Escherichia coli K-12: a cooperatively developed annotation snapshot -- 2005.</title>
        <authorList>
            <person name="Riley M."/>
            <person name="Abe T."/>
            <person name="Arnaud M.B."/>
            <person name="Berlyn M.K.B."/>
            <person name="Blattner F.R."/>
            <person name="Chaudhuri R.R."/>
            <person name="Glasner J.D."/>
            <person name="Horiuchi T."/>
            <person name="Keseler I.M."/>
            <person name="Kosuge T."/>
            <person name="Mori H."/>
            <person name="Perna N.T."/>
            <person name="Plunkett G. III"/>
            <person name="Rudd K.E."/>
            <person name="Serres M.H."/>
            <person name="Thomas G.H."/>
            <person name="Thomson N.R."/>
            <person name="Wishart D."/>
            <person name="Wanner B.L."/>
        </authorList>
    </citation>
    <scope>SEQUENCE REVISION TO 592-607</scope>
</reference>
<reference key="4">
    <citation type="journal article" date="2006" name="Mol. Syst. Biol.">
        <title>Highly accurate genome sequences of Escherichia coli K-12 strains MG1655 and W3110.</title>
        <authorList>
            <person name="Hayashi K."/>
            <person name="Morooka N."/>
            <person name="Yamamoto Y."/>
            <person name="Fujita K."/>
            <person name="Isono K."/>
            <person name="Choi S."/>
            <person name="Ohtsubo E."/>
            <person name="Baba T."/>
            <person name="Wanner B.L."/>
            <person name="Mori H."/>
            <person name="Horiuchi T."/>
        </authorList>
    </citation>
    <scope>NUCLEOTIDE SEQUENCE [LARGE SCALE GENOMIC DNA]</scope>
    <source>
        <strain>K12 / W3110 / ATCC 27325 / DSM 5911</strain>
    </source>
</reference>
<reference key="5">
    <citation type="journal article" date="1997" name="Electrophoresis">
        <title>Comparing the predicted and observed properties of proteins encoded in the genome of Escherichia coli K-12.</title>
        <authorList>
            <person name="Link A.J."/>
            <person name="Robison K."/>
            <person name="Church G.M."/>
        </authorList>
    </citation>
    <scope>PROTEIN SEQUENCE OF 1-12</scope>
    <source>
        <strain>K12 / EMG2</strain>
    </source>
</reference>
<reference key="6">
    <citation type="journal article" date="1998" name="J. Mol. Biol.">
        <title>Tyrosine phosphorylation in Escherichia coli.</title>
        <authorList>
            <person name="Freestone P."/>
            <person name="Trinei M."/>
            <person name="Clarke S.C."/>
            <person name="Nystroem T."/>
            <person name="Norris V."/>
        </authorList>
    </citation>
    <scope>NOT PHOSPHORYLATED</scope>
    <source>
        <strain>K12</strain>
    </source>
</reference>
<reference key="7">
    <citation type="journal article" date="1998" name="Mol. Microbiol.">
        <title>BipA: a tyrosine-phosphorylated GTPase that mediates interactions between enteropathogenic Escherichia coli (EPEC) and epithelial cells.</title>
        <authorList>
            <person name="Farris M."/>
            <person name="Grant A."/>
            <person name="Richardson T.B."/>
            <person name="O'Connor C.D."/>
        </authorList>
    </citation>
    <scope>FUNCTION IN EPEC BACTERIA</scope>
    <scope>WEAK PHOSPHORYLATION</scope>
    <source>
        <strain>K12</strain>
    </source>
</reference>
<reference key="8">
    <citation type="journal article" date="2000" name="J. Bacteriol.">
        <title>Regulation of the Escherichia coli K5 capsule gene cluster: evidence for the roles of H-NS, BipA, and integration host factor in regulation of group 2 capsule gene clusters in pathogenic E. coli.</title>
        <authorList>
            <person name="Rowe S."/>
            <person name="Hodson N."/>
            <person name="Griffiths G."/>
            <person name="Roberts I.S."/>
        </authorList>
    </citation>
    <scope>FUNCTION</scope>
    <scope>DISRUPTION PHENOTYPE</scope>
    <source>
        <strain>K12 / MC4100 / ATCC 35695 / DSM 6574</strain>
    </source>
</reference>
<reference key="9">
    <citation type="journal article" date="2001" name="Mol. Genet. Genomics">
        <title>BipA is required for growth of Escherichia coli K12 at low temperature.</title>
        <authorList>
            <person name="Pfennig P.L."/>
            <person name="Flower A.M."/>
        </authorList>
    </citation>
    <scope>DISRUPTION PHENOTYPE</scope>
    <source>
        <strain>K12 / D10</strain>
        <strain>K12 / MG1655 / ATCC 47076</strain>
    </source>
</reference>
<reference key="10">
    <citation type="journal article" date="2008" name="J. Bacteriol.">
        <title>Suppression of DeltabipA phenotypes in Escherichia coli by abolishment of pseudouridylation at specific sites on the 23S rRNA.</title>
        <authorList>
            <person name="Krishnan K."/>
            <person name="Flower A.M."/>
        </authorList>
    </citation>
    <scope>SUPPRESSION BY RLUC DELETION</scope>
    <scope>DISRUPTION PHENOTYPE</scope>
    <source>
        <strain>K12</strain>
    </source>
</reference>
<reference key="11">
    <citation type="journal article" date="2015" name="J. Bacteriol.">
        <title>Efficient assembly of ribosomes is inhibited by deletion of bipA in Escherichia coli.</title>
        <authorList>
            <person name="Choudhury P."/>
            <person name="Flower A.M."/>
        </authorList>
    </citation>
    <scope>PROBABLE FUNCTION IN RIBOSOMAL ASSEMBLY</scope>
    <scope>SUPPRESSION BY RLUC DELETION</scope>
    <scope>DISRUPTION PHENOTYPE</scope>
    <source>
        <strain>K12 / MG1655 / ATCC 47076</strain>
    </source>
</reference>
<reference key="12">
    <citation type="thesis" date="2015" institute="University of Michigan" country="United States">
        <title>Elucidating Ribosomes-Genetic Studies of the ATPase Uup and the Ribosomal Protein L1.</title>
        <authorList>
            <person name="Cochrane K.L."/>
        </authorList>
    </citation>
    <scope>SUBCELLULAR LOCATION</scope>
    <scope>INDUCTION BY COLD</scope>
    <scope>DISRUPTION PHENOTYPE</scope>
    <source>
        <strain>K12 / BW25113</strain>
    </source>
</reference>
<reference key="13">
    <citation type="journal article" date="2018" name="J. Biol. Chem.">
        <title>The GTPase BipA expressed at low temperature in Escherichia coli assists ribosome assembly and has chaperone-like activity.</title>
        <authorList>
            <person name="Choi E."/>
            <person name="Hwang J."/>
        </authorList>
    </citation>
    <scope>FUNCTION AS A CHAPERONE</scope>
    <scope>CATALYTIC ACTIVITY</scope>
    <scope>SUBCELLULAR LOCATION</scope>
    <scope>INDUCTION BY COLD</scope>
    <scope>NOT PHOSPHORYLATED</scope>
    <scope>DISRUPTION PHENOTYPE</scope>
    <scope>MUTAGENESIS OF ASN-128; TYR-164; TYR-472 AND TYR-519</scope>
    <source>
        <strain>K12 / MG1655 / ATCC 47076</strain>
    </source>
</reference>
<reference evidence="20 21 22 23" key="14">
    <citation type="journal article" date="2015" name="J. Biol. Chem.">
        <title>Structural and Functional Analysis of BipA, a Regulator of Virulence in Enteropathogenic Escherichia coli.</title>
        <authorList>
            <person name="Fan H."/>
            <person name="Hahm J."/>
            <person name="Diggs S."/>
            <person name="Perry J.J."/>
            <person name="Blaha G."/>
        </authorList>
    </citation>
    <scope>X-RAY CRYSTALLOGRAPHY (3.31 ANGSTROMS) ALONE AND IN COMPLEX WITH GDP AND GUANOSINE 3',5'-BIS(DIPHOSPHATE)</scope>
    <scope>X-RAY CRYSTALLOGRAPHY (2.48 ANGSTROMS) OF 306-603</scope>
    <scope>FUNCTION</scope>
    <scope>SUBUNIT</scope>
    <scope>DOMAIN</scope>
    <scope>NUCLEOTIDE-BINDING</scope>
    <source>
        <strain>K12 / MG1655 / ATCC 47076</strain>
    </source>
</reference>
<reference evidence="24 25 26 27 28 29" key="15">
    <citation type="journal article" date="2015" name="Proc. Natl. Acad. Sci. U.S.A.">
        <title>Structure of BipA in GTP form bound to the ratcheted ribosome.</title>
        <authorList>
            <person name="Kumar V."/>
            <person name="Chen Y."/>
            <person name="Ero R."/>
            <person name="Ahmed T."/>
            <person name="Tan J."/>
            <person name="Li Z."/>
            <person name="Wong A.S."/>
            <person name="Bhushan S."/>
            <person name="Gao Y.G."/>
        </authorList>
    </citation>
    <scope>X-RAY CRYSTALLOGRAPHY (3.70 ANGSTROMS) ALONE AND IN COMPLEX WITH GDP; GUANOSINE 3',5'-BIS(DIPHOSPHATE) AND GUANOSINE 5'-[BETA,GAMMA-METHYLENE]TRIPHOSPHATE</scope>
    <scope>STRUCTURE BY ELECTRON MICROSCOPY (4.70 ANGSTROMS) IN COMPLEX WITH T.THERMOPHILUS 70S RIBOSOME</scope>
    <scope>FUNCTION</scope>
    <scope>SUBUNIT</scope>
    <scope>DOMAIN</scope>
    <scope>NUCLEOTIDE-BINDING</scope>
</reference>